<sequence>MSDPSTYRPAPGTIPTEPGVYKFRDPEGRVIYVGKAINLRSRLSNYFQDLSVLHPRTRQMVTTATSVEWTVVASEVEALQLEYTWIKKFDPHFNVKYRDDKTYPVLAVSVGERFPRAYFYRGPQRKGVRYYGPYSHAWAVRETLDLLTRVFPIRTCTKAVFNRHESLGRPCLLGYIDKCSAPCIGRVSESEHRIIVDGFCSFMAGNTDSVVRRLTNEMISASEALDFEKAARKRDDLNAVRKITEQQAVVLGDGTDADVIAVAADDLEASIQLFHVRSGKIRGQRGWIVERTDNSESELEELLQSFLIRFYSDEVAHEDQVSDKELTVARRGVDKQSHESDLANRRINTSVVPKEVLVHKAPANVEQTTAVLRSLRHSNVDVRVPQRGDKRALADTVFANAQEALRQHKIKRVSDLTTRSAALQEIHEALGLDEPPLRIECTDISHIQGTDVVASLVVFEDGLPKKSDYRRYKIKEAAGEGKSNDVGSIAEVVRRRFARYKNDCRMVPQEDEFDGSRFEDESLAGENTVAAKQRFAYSPQLFIVDGGAPQVAAAQDVLDELGITDVALIGIAKRLEEIWLPGEEDPLILPRNSQGLYLIQQLRDEAHRFAITFHRQQRSQRMRRSILDDIKGLGPARRKVLVAHFGSVKELKKASESEIMMVNGIGPALAHSIYVALHPDSDDSSVQ</sequence>
<gene>
    <name evidence="1" type="primary">uvrC</name>
    <name type="ordered locus">DIP1314</name>
</gene>
<dbReference type="EMBL" id="BX248357">
    <property type="protein sequence ID" value="CAE49842.1"/>
    <property type="molecule type" value="Genomic_DNA"/>
</dbReference>
<dbReference type="RefSeq" id="WP_010934975.1">
    <property type="nucleotide sequence ID" value="NC_002935.2"/>
</dbReference>
<dbReference type="SMR" id="Q6NH31"/>
<dbReference type="STRING" id="257309.DIP1314"/>
<dbReference type="KEGG" id="cdi:DIP1314"/>
<dbReference type="HOGENOM" id="CLU_014841_3_2_11"/>
<dbReference type="Proteomes" id="UP000002198">
    <property type="component" value="Chromosome"/>
</dbReference>
<dbReference type="GO" id="GO:0005737">
    <property type="term" value="C:cytoplasm"/>
    <property type="evidence" value="ECO:0007669"/>
    <property type="project" value="UniProtKB-SubCell"/>
</dbReference>
<dbReference type="GO" id="GO:0009380">
    <property type="term" value="C:excinuclease repair complex"/>
    <property type="evidence" value="ECO:0007669"/>
    <property type="project" value="InterPro"/>
</dbReference>
<dbReference type="GO" id="GO:0003677">
    <property type="term" value="F:DNA binding"/>
    <property type="evidence" value="ECO:0007669"/>
    <property type="project" value="UniProtKB-UniRule"/>
</dbReference>
<dbReference type="GO" id="GO:0009381">
    <property type="term" value="F:excinuclease ABC activity"/>
    <property type="evidence" value="ECO:0007669"/>
    <property type="project" value="UniProtKB-UniRule"/>
</dbReference>
<dbReference type="GO" id="GO:0006289">
    <property type="term" value="P:nucleotide-excision repair"/>
    <property type="evidence" value="ECO:0007669"/>
    <property type="project" value="UniProtKB-UniRule"/>
</dbReference>
<dbReference type="GO" id="GO:0009432">
    <property type="term" value="P:SOS response"/>
    <property type="evidence" value="ECO:0007669"/>
    <property type="project" value="UniProtKB-UniRule"/>
</dbReference>
<dbReference type="CDD" id="cd10434">
    <property type="entry name" value="GIY-YIG_UvrC_Cho"/>
    <property type="match status" value="1"/>
</dbReference>
<dbReference type="FunFam" id="3.40.1440.10:FF:000001">
    <property type="entry name" value="UvrABC system protein C"/>
    <property type="match status" value="1"/>
</dbReference>
<dbReference type="Gene3D" id="1.10.150.20">
    <property type="entry name" value="5' to 3' exonuclease, C-terminal subdomain"/>
    <property type="match status" value="1"/>
</dbReference>
<dbReference type="Gene3D" id="3.40.1440.10">
    <property type="entry name" value="GIY-YIG endonuclease"/>
    <property type="match status" value="1"/>
</dbReference>
<dbReference type="Gene3D" id="4.10.860.10">
    <property type="entry name" value="UVR domain"/>
    <property type="match status" value="1"/>
</dbReference>
<dbReference type="Gene3D" id="3.30.420.340">
    <property type="entry name" value="UvrC, RNAse H endonuclease domain"/>
    <property type="match status" value="1"/>
</dbReference>
<dbReference type="HAMAP" id="MF_00203">
    <property type="entry name" value="UvrC"/>
    <property type="match status" value="1"/>
</dbReference>
<dbReference type="InterPro" id="IPR000305">
    <property type="entry name" value="GIY-YIG_endonuc"/>
</dbReference>
<dbReference type="InterPro" id="IPR035901">
    <property type="entry name" value="GIY-YIG_endonuc_sf"/>
</dbReference>
<dbReference type="InterPro" id="IPR047296">
    <property type="entry name" value="GIY-YIG_UvrC_Cho"/>
</dbReference>
<dbReference type="InterPro" id="IPR010994">
    <property type="entry name" value="RuvA_2-like"/>
</dbReference>
<dbReference type="InterPro" id="IPR001943">
    <property type="entry name" value="UVR_dom"/>
</dbReference>
<dbReference type="InterPro" id="IPR036876">
    <property type="entry name" value="UVR_dom_sf"/>
</dbReference>
<dbReference type="InterPro" id="IPR050066">
    <property type="entry name" value="UvrABC_protein_C"/>
</dbReference>
<dbReference type="InterPro" id="IPR004791">
    <property type="entry name" value="UvrC"/>
</dbReference>
<dbReference type="InterPro" id="IPR001162">
    <property type="entry name" value="UvrC_RNase_H_dom"/>
</dbReference>
<dbReference type="InterPro" id="IPR038476">
    <property type="entry name" value="UvrC_RNase_H_dom_sf"/>
</dbReference>
<dbReference type="NCBIfam" id="NF001824">
    <property type="entry name" value="PRK00558.1-5"/>
    <property type="match status" value="1"/>
</dbReference>
<dbReference type="PANTHER" id="PTHR30562:SF1">
    <property type="entry name" value="UVRABC SYSTEM PROTEIN C"/>
    <property type="match status" value="1"/>
</dbReference>
<dbReference type="PANTHER" id="PTHR30562">
    <property type="entry name" value="UVRC/OXIDOREDUCTASE"/>
    <property type="match status" value="1"/>
</dbReference>
<dbReference type="Pfam" id="PF01541">
    <property type="entry name" value="GIY-YIG"/>
    <property type="match status" value="1"/>
</dbReference>
<dbReference type="Pfam" id="PF14520">
    <property type="entry name" value="HHH_5"/>
    <property type="match status" value="1"/>
</dbReference>
<dbReference type="Pfam" id="PF02151">
    <property type="entry name" value="UVR"/>
    <property type="match status" value="1"/>
</dbReference>
<dbReference type="Pfam" id="PF22920">
    <property type="entry name" value="UvrC_RNaseH"/>
    <property type="match status" value="1"/>
</dbReference>
<dbReference type="Pfam" id="PF08459">
    <property type="entry name" value="UvrC_RNaseH_dom"/>
    <property type="match status" value="1"/>
</dbReference>
<dbReference type="SMART" id="SM00465">
    <property type="entry name" value="GIYc"/>
    <property type="match status" value="1"/>
</dbReference>
<dbReference type="SUPFAM" id="SSF46600">
    <property type="entry name" value="C-terminal UvrC-binding domain of UvrB"/>
    <property type="match status" value="1"/>
</dbReference>
<dbReference type="SUPFAM" id="SSF82771">
    <property type="entry name" value="GIY-YIG endonuclease"/>
    <property type="match status" value="1"/>
</dbReference>
<dbReference type="SUPFAM" id="SSF47781">
    <property type="entry name" value="RuvA domain 2-like"/>
    <property type="match status" value="1"/>
</dbReference>
<dbReference type="PROSITE" id="PS50164">
    <property type="entry name" value="GIY_YIG"/>
    <property type="match status" value="1"/>
</dbReference>
<dbReference type="PROSITE" id="PS50151">
    <property type="entry name" value="UVR"/>
    <property type="match status" value="1"/>
</dbReference>
<dbReference type="PROSITE" id="PS50165">
    <property type="entry name" value="UVRC"/>
    <property type="match status" value="1"/>
</dbReference>
<evidence type="ECO:0000255" key="1">
    <source>
        <dbReference type="HAMAP-Rule" id="MF_00203"/>
    </source>
</evidence>
<feature type="chain" id="PRO_0000227417" description="UvrABC system protein C">
    <location>
        <begin position="1"/>
        <end position="687"/>
    </location>
</feature>
<feature type="domain" description="GIY-YIG" evidence="1">
    <location>
        <begin position="16"/>
        <end position="95"/>
    </location>
</feature>
<feature type="domain" description="UVR" evidence="1">
    <location>
        <begin position="208"/>
        <end position="243"/>
    </location>
</feature>
<proteinExistence type="inferred from homology"/>
<reference key="1">
    <citation type="journal article" date="2003" name="Nucleic Acids Res.">
        <title>The complete genome sequence and analysis of Corynebacterium diphtheriae NCTC13129.</title>
        <authorList>
            <person name="Cerdeno-Tarraga A.-M."/>
            <person name="Efstratiou A."/>
            <person name="Dover L.G."/>
            <person name="Holden M.T.G."/>
            <person name="Pallen M.J."/>
            <person name="Bentley S.D."/>
            <person name="Besra G.S."/>
            <person name="Churcher C.M."/>
            <person name="James K.D."/>
            <person name="De Zoysa A."/>
            <person name="Chillingworth T."/>
            <person name="Cronin A."/>
            <person name="Dowd L."/>
            <person name="Feltwell T."/>
            <person name="Hamlin N."/>
            <person name="Holroyd S."/>
            <person name="Jagels K."/>
            <person name="Moule S."/>
            <person name="Quail M.A."/>
            <person name="Rabbinowitsch E."/>
            <person name="Rutherford K.M."/>
            <person name="Thomson N.R."/>
            <person name="Unwin L."/>
            <person name="Whitehead S."/>
            <person name="Barrell B.G."/>
            <person name="Parkhill J."/>
        </authorList>
    </citation>
    <scope>NUCLEOTIDE SEQUENCE [LARGE SCALE GENOMIC DNA]</scope>
    <source>
        <strain>ATCC 700971 / NCTC 13129 / Biotype gravis</strain>
    </source>
</reference>
<name>UVRC_CORDI</name>
<accession>Q6NH31</accession>
<comment type="function">
    <text evidence="1">The UvrABC repair system catalyzes the recognition and processing of DNA lesions. UvrC both incises the 5' and 3' sides of the lesion. The N-terminal half is responsible for the 3' incision and the C-terminal half is responsible for the 5' incision.</text>
</comment>
<comment type="subunit">
    <text evidence="1">Interacts with UvrB in an incision complex.</text>
</comment>
<comment type="subcellular location">
    <subcellularLocation>
        <location evidence="1">Cytoplasm</location>
    </subcellularLocation>
</comment>
<comment type="similarity">
    <text evidence="1">Belongs to the UvrC family.</text>
</comment>
<organism>
    <name type="scientific">Corynebacterium diphtheriae (strain ATCC 700971 / NCTC 13129 / Biotype gravis)</name>
    <dbReference type="NCBI Taxonomy" id="257309"/>
    <lineage>
        <taxon>Bacteria</taxon>
        <taxon>Bacillati</taxon>
        <taxon>Actinomycetota</taxon>
        <taxon>Actinomycetes</taxon>
        <taxon>Mycobacteriales</taxon>
        <taxon>Corynebacteriaceae</taxon>
        <taxon>Corynebacterium</taxon>
    </lineage>
</organism>
<keyword id="KW-0963">Cytoplasm</keyword>
<keyword id="KW-0227">DNA damage</keyword>
<keyword id="KW-0228">DNA excision</keyword>
<keyword id="KW-0234">DNA repair</keyword>
<keyword id="KW-0267">Excision nuclease</keyword>
<keyword id="KW-1185">Reference proteome</keyword>
<keyword id="KW-0742">SOS response</keyword>
<protein>
    <recommendedName>
        <fullName evidence="1">UvrABC system protein C</fullName>
        <shortName evidence="1">Protein UvrC</shortName>
    </recommendedName>
    <alternativeName>
        <fullName evidence="1">Excinuclease ABC subunit C</fullName>
    </alternativeName>
</protein>